<gene>
    <name type="primary">mvp</name>
</gene>
<evidence type="ECO:0000250" key="1"/>
<evidence type="ECO:0000250" key="2">
    <source>
        <dbReference type="UniProtKB" id="Q14764"/>
    </source>
</evidence>
<evidence type="ECO:0000255" key="3">
    <source>
        <dbReference type="PROSITE-ProRule" id="PRU00116"/>
    </source>
</evidence>
<evidence type="ECO:0000256" key="4">
    <source>
        <dbReference type="SAM" id="MobiDB-lite"/>
    </source>
</evidence>
<evidence type="ECO:0000303" key="5">
    <source ref="1"/>
</evidence>
<evidence type="ECO:0000305" key="6"/>
<protein>
    <recommendedName>
        <fullName>Major vault protein</fullName>
        <shortName>MVP</shortName>
    </recommendedName>
</protein>
<dbReference type="EMBL" id="BC049344">
    <property type="protein sequence ID" value="AAH49344.1"/>
    <property type="molecule type" value="mRNA"/>
</dbReference>
<dbReference type="EMBL" id="BC063949">
    <property type="protein sequence ID" value="AAH63949.1"/>
    <property type="molecule type" value="mRNA"/>
</dbReference>
<dbReference type="RefSeq" id="NP_958482.1">
    <molecule id="Q6P3L0-1"/>
    <property type="nucleotide sequence ID" value="NM_201325.2"/>
</dbReference>
<dbReference type="SMR" id="Q6P3L0"/>
<dbReference type="FunCoup" id="Q6P3L0">
    <property type="interactions" value="222"/>
</dbReference>
<dbReference type="STRING" id="7955.ENSDARP00000115387"/>
<dbReference type="PaxDb" id="7955-ENSDARP00000112736"/>
<dbReference type="GeneID" id="373081"/>
<dbReference type="KEGG" id="dre:373081"/>
<dbReference type="AGR" id="ZFIN:ZDB-GENE-030826-33"/>
<dbReference type="CTD" id="9961"/>
<dbReference type="ZFIN" id="ZDB-GENE-030826-33">
    <property type="gene designation" value="mvp"/>
</dbReference>
<dbReference type="eggNOG" id="ENOG502QPP0">
    <property type="taxonomic scope" value="Eukaryota"/>
</dbReference>
<dbReference type="InParanoid" id="Q6P3L0"/>
<dbReference type="OrthoDB" id="6125719at2759"/>
<dbReference type="PhylomeDB" id="Q6P3L0"/>
<dbReference type="Reactome" id="R-DRE-6798695">
    <property type="pathway name" value="Neutrophil degranulation"/>
</dbReference>
<dbReference type="PRO" id="PR:Q6P3L0"/>
<dbReference type="Proteomes" id="UP000000437">
    <property type="component" value="Chromosome 3"/>
</dbReference>
<dbReference type="GO" id="GO:0005737">
    <property type="term" value="C:cytoplasm"/>
    <property type="evidence" value="ECO:0000318"/>
    <property type="project" value="GO_Central"/>
</dbReference>
<dbReference type="GO" id="GO:0005634">
    <property type="term" value="C:nucleus"/>
    <property type="evidence" value="ECO:0000318"/>
    <property type="project" value="GO_Central"/>
</dbReference>
<dbReference type="GO" id="GO:1990904">
    <property type="term" value="C:ribonucleoprotein complex"/>
    <property type="evidence" value="ECO:0007669"/>
    <property type="project" value="UniProtKB-KW"/>
</dbReference>
<dbReference type="GO" id="GO:0007420">
    <property type="term" value="P:brain development"/>
    <property type="evidence" value="ECO:0000315"/>
    <property type="project" value="ZFIN"/>
</dbReference>
<dbReference type="GO" id="GO:0001654">
    <property type="term" value="P:eye development"/>
    <property type="evidence" value="ECO:0000315"/>
    <property type="project" value="ZFIN"/>
</dbReference>
<dbReference type="GO" id="GO:0031102">
    <property type="term" value="P:neuron projection regeneration"/>
    <property type="evidence" value="ECO:0000315"/>
    <property type="project" value="ZFIN"/>
</dbReference>
<dbReference type="CDD" id="cd06503">
    <property type="entry name" value="ATP-synt_Fo_b"/>
    <property type="match status" value="1"/>
</dbReference>
<dbReference type="CDD" id="cd08825">
    <property type="entry name" value="MVP_shoulder"/>
    <property type="match status" value="1"/>
</dbReference>
<dbReference type="FunFam" id="2.30.30.560:FF:000002">
    <property type="entry name" value="Major vault protein-alpha"/>
    <property type="match status" value="1"/>
</dbReference>
<dbReference type="FunFam" id="2.30.30.570:FF:000002">
    <property type="entry name" value="Major vault protein-alpha"/>
    <property type="match status" value="1"/>
</dbReference>
<dbReference type="FunFam" id="2.30.30.550:FF:000001">
    <property type="entry name" value="major vault protein-like"/>
    <property type="match status" value="3"/>
</dbReference>
<dbReference type="FunFam" id="2.30.30.560:FF:000001">
    <property type="entry name" value="major vault protein-like"/>
    <property type="match status" value="1"/>
</dbReference>
<dbReference type="FunFam" id="2.30.30.570:FF:000001">
    <property type="entry name" value="major vault protein-like"/>
    <property type="match status" value="1"/>
</dbReference>
<dbReference type="FunFam" id="2.30.30.620:FF:000001">
    <property type="entry name" value="major vault protein-like"/>
    <property type="match status" value="1"/>
</dbReference>
<dbReference type="FunFam" id="3.30.479.30:FF:000010">
    <property type="entry name" value="major vault protein-like"/>
    <property type="match status" value="1"/>
</dbReference>
<dbReference type="Gene3D" id="2.30.30.560">
    <property type="match status" value="2"/>
</dbReference>
<dbReference type="Gene3D" id="2.30.30.570">
    <property type="match status" value="2"/>
</dbReference>
<dbReference type="Gene3D" id="2.30.30.620">
    <property type="match status" value="1"/>
</dbReference>
<dbReference type="Gene3D" id="6.10.250.720">
    <property type="match status" value="1"/>
</dbReference>
<dbReference type="Gene3D" id="6.20.380.10">
    <property type="match status" value="1"/>
</dbReference>
<dbReference type="Gene3D" id="3.30.479.30">
    <property type="entry name" value="Band 7 domain"/>
    <property type="match status" value="1"/>
</dbReference>
<dbReference type="Gene3D" id="2.30.30.550">
    <property type="entry name" value="Major Vault Protein repeat"/>
    <property type="match status" value="4"/>
</dbReference>
<dbReference type="InterPro" id="IPR036013">
    <property type="entry name" value="Band_7/SPFH_dom_sf"/>
</dbReference>
<dbReference type="InterPro" id="IPR039059">
    <property type="entry name" value="MVP"/>
</dbReference>
<dbReference type="InterPro" id="IPR041139">
    <property type="entry name" value="MVP_rep_dom"/>
</dbReference>
<dbReference type="InterPro" id="IPR043023">
    <property type="entry name" value="MVP_rep_sf"/>
</dbReference>
<dbReference type="InterPro" id="IPR021870">
    <property type="entry name" value="MVP_shoulder"/>
</dbReference>
<dbReference type="InterPro" id="IPR041134">
    <property type="entry name" value="Vault_2"/>
</dbReference>
<dbReference type="InterPro" id="IPR043179">
    <property type="entry name" value="Vault_2_sf"/>
</dbReference>
<dbReference type="InterPro" id="IPR040989">
    <property type="entry name" value="Vault_3"/>
</dbReference>
<dbReference type="InterPro" id="IPR041136">
    <property type="entry name" value="Vault_4"/>
</dbReference>
<dbReference type="InterPro" id="IPR002499">
    <property type="entry name" value="Vault_N"/>
</dbReference>
<dbReference type="PANTHER" id="PTHR14165">
    <property type="entry name" value="MAJOR VAULT PROTEIN"/>
    <property type="match status" value="1"/>
</dbReference>
<dbReference type="PANTHER" id="PTHR14165:SF3">
    <property type="entry name" value="MAJOR VAULT PROTEIN"/>
    <property type="match status" value="1"/>
</dbReference>
<dbReference type="Pfam" id="PF11978">
    <property type="entry name" value="MVP_shoulder"/>
    <property type="match status" value="1"/>
</dbReference>
<dbReference type="Pfam" id="PF01505">
    <property type="entry name" value="Vault"/>
    <property type="match status" value="4"/>
</dbReference>
<dbReference type="Pfam" id="PF17794">
    <property type="entry name" value="Vault_2"/>
    <property type="match status" value="2"/>
</dbReference>
<dbReference type="Pfam" id="PF17795">
    <property type="entry name" value="Vault_3"/>
    <property type="match status" value="1"/>
</dbReference>
<dbReference type="Pfam" id="PF17796">
    <property type="entry name" value="Vault_4"/>
    <property type="match status" value="1"/>
</dbReference>
<dbReference type="PROSITE" id="PS50096">
    <property type="entry name" value="IQ"/>
    <property type="match status" value="1"/>
</dbReference>
<dbReference type="PROSITE" id="PS51224">
    <property type="entry name" value="MVP"/>
    <property type="match status" value="8"/>
</dbReference>
<accession>Q6P3L0</accession>
<accession>Q7ZUB4</accession>
<name>MVP_DANRE</name>
<proteinExistence type="evidence at transcript level"/>
<reference key="1">
    <citation type="submission" date="2003-12" db="EMBL/GenBank/DDBJ databases">
        <authorList>
            <consortium name="NIH - Zebrafish Gene Collection (ZGC) project"/>
        </authorList>
    </citation>
    <scope>NUCLEOTIDE SEQUENCE [LARGE SCALE MRNA] (ISOFORMS 1 AND 2)</scope>
</reference>
<keyword id="KW-0025">Alternative splicing</keyword>
<keyword id="KW-0963">Cytoplasm</keyword>
<keyword id="KW-0539">Nucleus</keyword>
<keyword id="KW-1185">Reference proteome</keyword>
<keyword id="KW-0677">Repeat</keyword>
<keyword id="KW-0687">Ribonucleoprotein</keyword>
<organism>
    <name type="scientific">Danio rerio</name>
    <name type="common">Zebrafish</name>
    <name type="synonym">Brachydanio rerio</name>
    <dbReference type="NCBI Taxonomy" id="7955"/>
    <lineage>
        <taxon>Eukaryota</taxon>
        <taxon>Metazoa</taxon>
        <taxon>Chordata</taxon>
        <taxon>Craniata</taxon>
        <taxon>Vertebrata</taxon>
        <taxon>Euteleostomi</taxon>
        <taxon>Actinopterygii</taxon>
        <taxon>Neopterygii</taxon>
        <taxon>Teleostei</taxon>
        <taxon>Ostariophysi</taxon>
        <taxon>Cypriniformes</taxon>
        <taxon>Danionidae</taxon>
        <taxon>Danioninae</taxon>
        <taxon>Danio</taxon>
    </lineage>
</organism>
<comment type="function">
    <text evidence="1">Required for normal vault structure. Vaults are multi-subunit structures that may act as scaffolds for proteins involved in signal transduction. Vaults may also play a role in nucleo-cytoplasmic transport (By similarity).</text>
</comment>
<comment type="subunit">
    <text evidence="1">The vault ribonucleoprotein particle is a huge (400 A x 670 A) cage structure of 12.9 MDa. It consists of a dimer of half-vaults, with each half-vault comprising 39 identical major vault protein (MVP) chains, PARP4 and one or more vault RNAs (vRNAs) (By similarity).</text>
</comment>
<comment type="subcellular location">
    <subcellularLocation>
        <location evidence="2">Cytoplasm</location>
    </subcellularLocation>
    <subcellularLocation>
        <location evidence="2">Nucleus</location>
    </subcellularLocation>
</comment>
<comment type="alternative products">
    <event type="alternative splicing"/>
    <isoform>
        <id>Q6P3L0-1</id>
        <name>1</name>
        <sequence type="displayed"/>
    </isoform>
    <isoform>
        <id>Q6P3L0-2</id>
        <name>2</name>
        <sequence type="described" ref="VSP_019981"/>
    </isoform>
</comment>
<feature type="chain" id="PRO_0000247490" description="Major vault protein">
    <location>
        <begin position="1"/>
        <end position="863"/>
    </location>
</feature>
<feature type="repeat" description="MVP 1">
    <location>
        <begin position="2"/>
        <end position="60"/>
    </location>
</feature>
<feature type="repeat" description="MVP 2">
    <location>
        <begin position="61"/>
        <end position="115"/>
    </location>
</feature>
<feature type="repeat" description="MVP 3">
    <location>
        <begin position="116"/>
        <end position="168"/>
    </location>
</feature>
<feature type="repeat" description="MVP 4">
    <location>
        <begin position="169"/>
        <end position="221"/>
    </location>
</feature>
<feature type="repeat" description="MVP 5">
    <location>
        <begin position="222"/>
        <end position="276"/>
    </location>
</feature>
<feature type="repeat" description="MVP 6">
    <location>
        <begin position="277"/>
        <end position="327"/>
    </location>
</feature>
<feature type="repeat" description="MVP 7">
    <location>
        <begin position="328"/>
        <end position="396"/>
    </location>
</feature>
<feature type="repeat" description="MVP 8">
    <location>
        <begin position="397"/>
        <end position="471"/>
    </location>
</feature>
<feature type="repeat" description="MVP 9">
    <location>
        <begin position="472"/>
        <end position="534"/>
    </location>
</feature>
<feature type="domain" description="IQ" evidence="3">
    <location>
        <begin position="677"/>
        <end position="706"/>
    </location>
</feature>
<feature type="region of interest" description="Disordered" evidence="4">
    <location>
        <begin position="349"/>
        <end position="368"/>
    </location>
</feature>
<feature type="splice variant" id="VSP_019981" description="In isoform 2." evidence="5">
    <location>
        <begin position="710"/>
        <end position="735"/>
    </location>
</feature>
<feature type="sequence conflict" description="In Ref. 1; AAH49344." evidence="6" ref="1">
    <original>D</original>
    <variation>E</variation>
    <location>
        <position position="2"/>
    </location>
</feature>
<feature type="sequence conflict" description="In Ref. 1; AAH49344." evidence="6" ref="1">
    <original>G</original>
    <variation>GQ</variation>
    <location>
        <position position="349"/>
    </location>
</feature>
<sequence>MDADHLLGASIIRIPPHHYIHVLDQNTNIARVEIGPLTYIRQDNERVLFAPVRMMMVPPRHYCVVLNPAVRDDEGQVQFDGSGQVKLRHADLEIRLAQDPFPLYPGEEIQKDVTPLQIVYPDTALRLQALLDFEEEGGEKRVAGDEWLFEGPGTYIPRKEVTVLEVIKATVIRENQAIRLRARKEGLDRSGVQRVTGEEWQVSKVGAYLPGAHEEVVDIVSAFILTDKKALHVRAIRPFRDAGGRDRRTGEEWLVTVADREAHIPSVAEEVVGVVDVTTLNSRQYCVIMDPVGADGKPQLGQKRVVKGERSFFLMPGEHLENGIQDVYVLSEEEGLVLRAVEAFIDTQGDEAEEEERESRAKKRGVQRRPGDRWMLRGPIEYVPPATVEVLLTRTAIPLDENEGIYVRDIKTGKVRAVIGQTYMLTQDEELWEKELPANVESLLAQSRDPLADRSDRGRSFGQAERDKTRVVSYRIPHNATVQVYDYREKKARVMFGPEMVMLGPDEQFTVLSLSGDKPKRPNVIKTICLLLGPDFCTDIITIETADHARLQLQLSYNWHFDLKQPADAAQAAALFSVPDFVGDACKAIASRIRGAVASVQFDDFHKNSNRIICSAVFGFDEKLAVRSSLRFGQNGLVISSVDIQSVEPVDQRTRDALQKSVQLAIEITTNSQEAAARHEAERLEQEARGRLERQKITDQAEAEKARKELLELEAQSAAVESTGAAKAEAQSRAEAARIQGEAAVEEAKLKAEAQKIEADSELARLCKAREQELNYKKQIDHLEVEKQQKLADIESQRFKHLMDNLGTETLKEMARAGPELQVKLLQSLGLKSTLITDGSSPINLFTTANGLLGSLQGKDKDE</sequence>